<feature type="chain" id="PRO_0000380529" description="UDP-4-amino-4-deoxy-L-arabinose--oxoglutarate aminotransferase">
    <location>
        <begin position="1"/>
        <end position="379"/>
    </location>
</feature>
<feature type="modified residue" description="N6-(pyridoxal phosphate)lysine" evidence="1">
    <location>
        <position position="182"/>
    </location>
</feature>
<comment type="function">
    <text evidence="1">Catalyzes the conversion of UDP-4-keto-arabinose (UDP-Ara4O) to UDP-4-amino-4-deoxy-L-arabinose (UDP-L-Ara4N). The modified arabinose is attached to lipid A and is required for resistance to polymyxin and cationic antimicrobial peptides.</text>
</comment>
<comment type="catalytic activity">
    <reaction evidence="1">
        <text>UDP-4-amino-4-deoxy-beta-L-arabinose + 2-oxoglutarate = UDP-beta-L-threo-pentopyranos-4-ulose + L-glutamate</text>
        <dbReference type="Rhea" id="RHEA:24710"/>
        <dbReference type="ChEBI" id="CHEBI:16810"/>
        <dbReference type="ChEBI" id="CHEBI:29985"/>
        <dbReference type="ChEBI" id="CHEBI:58708"/>
        <dbReference type="ChEBI" id="CHEBI:58710"/>
        <dbReference type="EC" id="2.6.1.87"/>
    </reaction>
</comment>
<comment type="cofactor">
    <cofactor evidence="1">
        <name>pyridoxal 5'-phosphate</name>
        <dbReference type="ChEBI" id="CHEBI:597326"/>
    </cofactor>
</comment>
<comment type="pathway">
    <text evidence="1">Nucleotide-sugar biosynthesis; UDP-4-deoxy-4-formamido-beta-L-arabinose biosynthesis; UDP-4-deoxy-4-formamido-beta-L-arabinose from UDP-alpha-D-glucuronate: step 2/3.</text>
</comment>
<comment type="pathway">
    <text evidence="1">Bacterial outer membrane biogenesis; lipopolysaccharide biosynthesis.</text>
</comment>
<comment type="subunit">
    <text evidence="1">Homodimer.</text>
</comment>
<comment type="similarity">
    <text evidence="1">Belongs to the DegT/DnrJ/EryC1 family. ArnB subfamily.</text>
</comment>
<comment type="sequence caution" evidence="2">
    <conflict type="erroneous initiation">
        <sequence resource="EMBL-CDS" id="ABJ01645"/>
    </conflict>
</comment>
<dbReference type="EC" id="2.6.1.87" evidence="1"/>
<dbReference type="EMBL" id="CP000468">
    <property type="protein sequence ID" value="ABJ01645.1"/>
    <property type="status" value="ALT_INIT"/>
    <property type="molecule type" value="Genomic_DNA"/>
</dbReference>
<dbReference type="RefSeq" id="WP_011076488.1">
    <property type="nucleotide sequence ID" value="NZ_CADILS010000004.1"/>
</dbReference>
<dbReference type="SMR" id="A1ADA5"/>
<dbReference type="KEGG" id="ecv:APECO1_4308"/>
<dbReference type="HOGENOM" id="CLU_033332_0_3_6"/>
<dbReference type="UniPathway" id="UPA00030"/>
<dbReference type="UniPathway" id="UPA00032">
    <property type="reaction ID" value="UER00493"/>
</dbReference>
<dbReference type="Proteomes" id="UP000008216">
    <property type="component" value="Chromosome"/>
</dbReference>
<dbReference type="GO" id="GO:0016020">
    <property type="term" value="C:membrane"/>
    <property type="evidence" value="ECO:0007669"/>
    <property type="project" value="GOC"/>
</dbReference>
<dbReference type="GO" id="GO:0030170">
    <property type="term" value="F:pyridoxal phosphate binding"/>
    <property type="evidence" value="ECO:0007669"/>
    <property type="project" value="TreeGrafter"/>
</dbReference>
<dbReference type="GO" id="GO:0099620">
    <property type="term" value="F:UDP-4-amino-4-deoxy-L-arabinose aminotransferase"/>
    <property type="evidence" value="ECO:0007669"/>
    <property type="project" value="UniProtKB-EC"/>
</dbReference>
<dbReference type="GO" id="GO:0009245">
    <property type="term" value="P:lipid A biosynthetic process"/>
    <property type="evidence" value="ECO:0007669"/>
    <property type="project" value="UniProtKB-KW"/>
</dbReference>
<dbReference type="GO" id="GO:0009103">
    <property type="term" value="P:lipopolysaccharide biosynthetic process"/>
    <property type="evidence" value="ECO:0007669"/>
    <property type="project" value="UniProtKB-UniRule"/>
</dbReference>
<dbReference type="GO" id="GO:0046677">
    <property type="term" value="P:response to antibiotic"/>
    <property type="evidence" value="ECO:0007669"/>
    <property type="project" value="UniProtKB-KW"/>
</dbReference>
<dbReference type="CDD" id="cd00616">
    <property type="entry name" value="AHBA_syn"/>
    <property type="match status" value="1"/>
</dbReference>
<dbReference type="FunFam" id="3.40.640.10:FF:000040">
    <property type="entry name" value="UDP-4-amino-4-deoxy-L-arabinose--oxoglutarate aminotransferase"/>
    <property type="match status" value="1"/>
</dbReference>
<dbReference type="FunFam" id="3.90.1150.10:FF:000030">
    <property type="entry name" value="UDP-4-amino-4-deoxy-L-arabinose--oxoglutarate aminotransferase"/>
    <property type="match status" value="1"/>
</dbReference>
<dbReference type="Gene3D" id="3.90.1150.10">
    <property type="entry name" value="Aspartate Aminotransferase, domain 1"/>
    <property type="match status" value="1"/>
</dbReference>
<dbReference type="Gene3D" id="3.40.640.10">
    <property type="entry name" value="Type I PLP-dependent aspartate aminotransferase-like (Major domain)"/>
    <property type="match status" value="1"/>
</dbReference>
<dbReference type="HAMAP" id="MF_01167">
    <property type="entry name" value="ArnB_transfer"/>
    <property type="match status" value="1"/>
</dbReference>
<dbReference type="InterPro" id="IPR022850">
    <property type="entry name" value="ArnB_NH2Trfase"/>
</dbReference>
<dbReference type="InterPro" id="IPR000653">
    <property type="entry name" value="DegT/StrS_aminotransferase"/>
</dbReference>
<dbReference type="InterPro" id="IPR015424">
    <property type="entry name" value="PyrdxlP-dep_Trfase"/>
</dbReference>
<dbReference type="InterPro" id="IPR015421">
    <property type="entry name" value="PyrdxlP-dep_Trfase_major"/>
</dbReference>
<dbReference type="InterPro" id="IPR015422">
    <property type="entry name" value="PyrdxlP-dep_Trfase_small"/>
</dbReference>
<dbReference type="NCBIfam" id="NF008658">
    <property type="entry name" value="PRK11658.1"/>
    <property type="match status" value="1"/>
</dbReference>
<dbReference type="PANTHER" id="PTHR30244">
    <property type="entry name" value="TRANSAMINASE"/>
    <property type="match status" value="1"/>
</dbReference>
<dbReference type="PANTHER" id="PTHR30244:SF41">
    <property type="entry name" value="UDP-4-AMINO-4-DEOXY-L-ARABINOSE--OXOGLUTARATE AMINOTRANSFERASE"/>
    <property type="match status" value="1"/>
</dbReference>
<dbReference type="Pfam" id="PF01041">
    <property type="entry name" value="DegT_DnrJ_EryC1"/>
    <property type="match status" value="1"/>
</dbReference>
<dbReference type="PIRSF" id="PIRSF000390">
    <property type="entry name" value="PLP_StrS"/>
    <property type="match status" value="1"/>
</dbReference>
<dbReference type="SUPFAM" id="SSF53383">
    <property type="entry name" value="PLP-dependent transferases"/>
    <property type="match status" value="1"/>
</dbReference>
<evidence type="ECO:0000255" key="1">
    <source>
        <dbReference type="HAMAP-Rule" id="MF_01167"/>
    </source>
</evidence>
<evidence type="ECO:0000305" key="2"/>
<organism>
    <name type="scientific">Escherichia coli O1:K1 / APEC</name>
    <dbReference type="NCBI Taxonomy" id="405955"/>
    <lineage>
        <taxon>Bacteria</taxon>
        <taxon>Pseudomonadati</taxon>
        <taxon>Pseudomonadota</taxon>
        <taxon>Gammaproteobacteria</taxon>
        <taxon>Enterobacterales</taxon>
        <taxon>Enterobacteriaceae</taxon>
        <taxon>Escherichia</taxon>
    </lineage>
</organism>
<protein>
    <recommendedName>
        <fullName evidence="1">UDP-4-amino-4-deoxy-L-arabinose--oxoglutarate aminotransferase</fullName>
        <ecNumber evidence="1">2.6.1.87</ecNumber>
    </recommendedName>
    <alternativeName>
        <fullName evidence="1">UDP-(beta-L-threo-pentapyranosyl-4''-ulose diphosphate) aminotransferase</fullName>
        <shortName evidence="1">UDP-Ara4O aminotransferase</shortName>
    </alternativeName>
    <alternativeName>
        <fullName evidence="1">UDP-4-amino-4-deoxy-L-arabinose aminotransferase</fullName>
    </alternativeName>
</protein>
<gene>
    <name evidence="1" type="primary">arnB</name>
    <name type="ordered locus">Ecok1_21510</name>
    <name type="ORF">APECO1_4308</name>
</gene>
<name>ARNB_ECOK1</name>
<reference key="1">
    <citation type="journal article" date="2007" name="J. Bacteriol.">
        <title>The genome sequence of avian pathogenic Escherichia coli strain O1:K1:H7 shares strong similarities with human extraintestinal pathogenic E. coli genomes.</title>
        <authorList>
            <person name="Johnson T.J."/>
            <person name="Kariyawasam S."/>
            <person name="Wannemuehler Y."/>
            <person name="Mangiamele P."/>
            <person name="Johnson S.J."/>
            <person name="Doetkott C."/>
            <person name="Skyberg J.A."/>
            <person name="Lynne A.M."/>
            <person name="Johnson J.R."/>
            <person name="Nolan L.K."/>
        </authorList>
    </citation>
    <scope>NUCLEOTIDE SEQUENCE [LARGE SCALE GENOMIC DNA]</scope>
</reference>
<accession>A1ADA5</accession>
<sequence>MSGFLPFSRPAMGVEELAAVKEVLESGWITTGPKNQALEQAFCQLTGNQHAIAVSSATAGMHITLMALEIGKGDEVITPSLTWVSTLNMISLLGATPVMVDVDRDTLMVTPEAIEAAITPRTKAIIPVHYAGAPADIDAIRAIGERYGIAVIEDAAHAVGTYYKGRHIGAKGTAIFSFHAIKNITCAEGGLIVTDNENLARQLRMLKFHGLGVDAYDRHTWGRAPQAEVLTPGYKYNLTDINAAIALTQLVKLEHLNTRRREIAQQYQQALAALPFQPLSLPAWPHVHAWHLFIIRVDEQRCGISRDALMEALKERGIGTGLHFRAAHTQKYYRERFPTLSLPNTEWNSERICSLPLFPDMTTADADRVITALQQLAGQ</sequence>
<keyword id="KW-0032">Aminotransferase</keyword>
<keyword id="KW-0046">Antibiotic resistance</keyword>
<keyword id="KW-0441">Lipid A biosynthesis</keyword>
<keyword id="KW-0444">Lipid biosynthesis</keyword>
<keyword id="KW-0443">Lipid metabolism</keyword>
<keyword id="KW-0448">Lipopolysaccharide biosynthesis</keyword>
<keyword id="KW-0663">Pyridoxal phosphate</keyword>
<keyword id="KW-1185">Reference proteome</keyword>
<keyword id="KW-0808">Transferase</keyword>
<proteinExistence type="inferred from homology"/>